<keyword id="KW-0648">Protein biosynthesis</keyword>
<keyword id="KW-0808">Transferase</keyword>
<organism>
    <name type="scientific">Synechococcus sp. (strain CC9605)</name>
    <dbReference type="NCBI Taxonomy" id="110662"/>
    <lineage>
        <taxon>Bacteria</taxon>
        <taxon>Bacillati</taxon>
        <taxon>Cyanobacteriota</taxon>
        <taxon>Cyanophyceae</taxon>
        <taxon>Synechococcales</taxon>
        <taxon>Synechococcaceae</taxon>
        <taxon>Synechococcus</taxon>
    </lineage>
</organism>
<protein>
    <recommendedName>
        <fullName evidence="1">Methionyl-tRNA formyltransferase</fullName>
        <ecNumber evidence="1">2.1.2.9</ecNumber>
    </recommendedName>
</protein>
<feature type="chain" id="PRO_1000020194" description="Methionyl-tRNA formyltransferase">
    <location>
        <begin position="1"/>
        <end position="338"/>
    </location>
</feature>
<feature type="binding site" evidence="1">
    <location>
        <begin position="110"/>
        <end position="113"/>
    </location>
    <ligand>
        <name>(6S)-5,6,7,8-tetrahydrofolate</name>
        <dbReference type="ChEBI" id="CHEBI:57453"/>
    </ligand>
</feature>
<name>FMT_SYNSC</name>
<accession>Q3AK21</accession>
<sequence length="338" mass="36496">MNILFWGTPAYAVPTLDALHGAGHTIVGVVTQPDRRRGRGKQLVPSPVKARAEELGLPVFTPERIRRDDDCKAKLAALGADASVVVAFGQILPKDVLEQPPLGSWNGHGSLLPRWRGAGPIQWALLEGDQETGVGIMAMEEGLDTGPVLLEQRTPIELLDTSIALAERLSALTAELMVQAMPLIEAAGTGPEDERLAKLNVRVQAEGSTYARMLEKQDFQLDWSASALSIHRKVMGLHPGAFTQLHDKRLKVLRTEPLIERLQDQLSTEGRSLVGQWPTGGHPPGTILAMIEDLGLVVSSSGCPLLIREAQLEGKARSTAPALLQQLKATLGDRFGEV</sequence>
<evidence type="ECO:0000255" key="1">
    <source>
        <dbReference type="HAMAP-Rule" id="MF_00182"/>
    </source>
</evidence>
<reference key="1">
    <citation type="submission" date="2005-07" db="EMBL/GenBank/DDBJ databases">
        <title>Complete sequence of Synechococcus sp. CC9605.</title>
        <authorList>
            <consortium name="US DOE Joint Genome Institute"/>
            <person name="Copeland A."/>
            <person name="Lucas S."/>
            <person name="Lapidus A."/>
            <person name="Barry K."/>
            <person name="Detter J.C."/>
            <person name="Glavina T."/>
            <person name="Hammon N."/>
            <person name="Israni S."/>
            <person name="Pitluck S."/>
            <person name="Schmutz J."/>
            <person name="Martinez M."/>
            <person name="Larimer F."/>
            <person name="Land M."/>
            <person name="Kyrpides N."/>
            <person name="Ivanova N."/>
            <person name="Richardson P."/>
        </authorList>
    </citation>
    <scope>NUCLEOTIDE SEQUENCE [LARGE SCALE GENOMIC DNA]</scope>
    <source>
        <strain>CC9605</strain>
    </source>
</reference>
<comment type="function">
    <text evidence="1">Attaches a formyl group to the free amino group of methionyl-tRNA(fMet). The formyl group appears to play a dual role in the initiator identity of N-formylmethionyl-tRNA by promoting its recognition by IF2 and preventing the misappropriation of this tRNA by the elongation apparatus.</text>
</comment>
<comment type="catalytic activity">
    <reaction evidence="1">
        <text>L-methionyl-tRNA(fMet) + (6R)-10-formyltetrahydrofolate = N-formyl-L-methionyl-tRNA(fMet) + (6S)-5,6,7,8-tetrahydrofolate + H(+)</text>
        <dbReference type="Rhea" id="RHEA:24380"/>
        <dbReference type="Rhea" id="RHEA-COMP:9952"/>
        <dbReference type="Rhea" id="RHEA-COMP:9953"/>
        <dbReference type="ChEBI" id="CHEBI:15378"/>
        <dbReference type="ChEBI" id="CHEBI:57453"/>
        <dbReference type="ChEBI" id="CHEBI:78530"/>
        <dbReference type="ChEBI" id="CHEBI:78844"/>
        <dbReference type="ChEBI" id="CHEBI:195366"/>
        <dbReference type="EC" id="2.1.2.9"/>
    </reaction>
</comment>
<comment type="similarity">
    <text evidence="1">Belongs to the Fmt family.</text>
</comment>
<gene>
    <name evidence="1" type="primary">fmt</name>
    <name type="ordered locus">Syncc9605_1307</name>
</gene>
<proteinExistence type="inferred from homology"/>
<dbReference type="EC" id="2.1.2.9" evidence="1"/>
<dbReference type="EMBL" id="CP000110">
    <property type="protein sequence ID" value="ABB35061.1"/>
    <property type="molecule type" value="Genomic_DNA"/>
</dbReference>
<dbReference type="RefSeq" id="WP_011364280.1">
    <property type="nucleotide sequence ID" value="NC_007516.1"/>
</dbReference>
<dbReference type="SMR" id="Q3AK21"/>
<dbReference type="STRING" id="110662.Syncc9605_1307"/>
<dbReference type="KEGG" id="syd:Syncc9605_1307"/>
<dbReference type="eggNOG" id="COG0223">
    <property type="taxonomic scope" value="Bacteria"/>
</dbReference>
<dbReference type="HOGENOM" id="CLU_033347_1_1_3"/>
<dbReference type="OrthoDB" id="9802815at2"/>
<dbReference type="GO" id="GO:0005829">
    <property type="term" value="C:cytosol"/>
    <property type="evidence" value="ECO:0007669"/>
    <property type="project" value="TreeGrafter"/>
</dbReference>
<dbReference type="GO" id="GO:0004479">
    <property type="term" value="F:methionyl-tRNA formyltransferase activity"/>
    <property type="evidence" value="ECO:0007669"/>
    <property type="project" value="UniProtKB-UniRule"/>
</dbReference>
<dbReference type="CDD" id="cd08646">
    <property type="entry name" value="FMT_core_Met-tRNA-FMT_N"/>
    <property type="match status" value="1"/>
</dbReference>
<dbReference type="CDD" id="cd08704">
    <property type="entry name" value="Met_tRNA_FMT_C"/>
    <property type="match status" value="1"/>
</dbReference>
<dbReference type="Gene3D" id="3.40.50.12230">
    <property type="match status" value="1"/>
</dbReference>
<dbReference type="HAMAP" id="MF_00182">
    <property type="entry name" value="Formyl_trans"/>
    <property type="match status" value="1"/>
</dbReference>
<dbReference type="InterPro" id="IPR005794">
    <property type="entry name" value="Fmt"/>
</dbReference>
<dbReference type="InterPro" id="IPR005793">
    <property type="entry name" value="Formyl_trans_C"/>
</dbReference>
<dbReference type="InterPro" id="IPR002376">
    <property type="entry name" value="Formyl_transf_N"/>
</dbReference>
<dbReference type="InterPro" id="IPR036477">
    <property type="entry name" value="Formyl_transf_N_sf"/>
</dbReference>
<dbReference type="InterPro" id="IPR011034">
    <property type="entry name" value="Formyl_transferase-like_C_sf"/>
</dbReference>
<dbReference type="InterPro" id="IPR044135">
    <property type="entry name" value="Met-tRNA-FMT_C"/>
</dbReference>
<dbReference type="InterPro" id="IPR041711">
    <property type="entry name" value="Met-tRNA-FMT_N"/>
</dbReference>
<dbReference type="NCBIfam" id="TIGR00460">
    <property type="entry name" value="fmt"/>
    <property type="match status" value="1"/>
</dbReference>
<dbReference type="PANTHER" id="PTHR11138">
    <property type="entry name" value="METHIONYL-TRNA FORMYLTRANSFERASE"/>
    <property type="match status" value="1"/>
</dbReference>
<dbReference type="PANTHER" id="PTHR11138:SF5">
    <property type="entry name" value="METHIONYL-TRNA FORMYLTRANSFERASE, MITOCHONDRIAL"/>
    <property type="match status" value="1"/>
</dbReference>
<dbReference type="Pfam" id="PF02911">
    <property type="entry name" value="Formyl_trans_C"/>
    <property type="match status" value="1"/>
</dbReference>
<dbReference type="Pfam" id="PF00551">
    <property type="entry name" value="Formyl_trans_N"/>
    <property type="match status" value="1"/>
</dbReference>
<dbReference type="SUPFAM" id="SSF50486">
    <property type="entry name" value="FMT C-terminal domain-like"/>
    <property type="match status" value="1"/>
</dbReference>
<dbReference type="SUPFAM" id="SSF53328">
    <property type="entry name" value="Formyltransferase"/>
    <property type="match status" value="1"/>
</dbReference>